<evidence type="ECO:0000250" key="1">
    <source>
        <dbReference type="UniProtKB" id="P40237"/>
    </source>
</evidence>
<evidence type="ECO:0000255" key="2"/>
<evidence type="ECO:0000269" key="3">
    <source>
    </source>
</evidence>
<evidence type="ECO:0000269" key="4">
    <source>
    </source>
</evidence>
<evidence type="ECO:0000269" key="5">
    <source>
    </source>
</evidence>
<evidence type="ECO:0000269" key="6">
    <source>
    </source>
</evidence>
<evidence type="ECO:0000269" key="7">
    <source>
    </source>
</evidence>
<evidence type="ECO:0000269" key="8">
    <source>
    </source>
</evidence>
<evidence type="ECO:0000269" key="9">
    <source>
    </source>
</evidence>
<evidence type="ECO:0000269" key="10">
    <source>
    </source>
</evidence>
<evidence type="ECO:0000269" key="11">
    <source>
    </source>
</evidence>
<evidence type="ECO:0000269" key="12">
    <source>
    </source>
</evidence>
<evidence type="ECO:0000269" key="13">
    <source>
    </source>
</evidence>
<evidence type="ECO:0000269" key="14">
    <source>
    </source>
</evidence>
<evidence type="ECO:0000269" key="15">
    <source>
    </source>
</evidence>
<evidence type="ECO:0000269" key="16">
    <source>
    </source>
</evidence>
<evidence type="ECO:0000269" key="17">
    <source>
    </source>
</evidence>
<evidence type="ECO:0000269" key="18">
    <source>
    </source>
</evidence>
<evidence type="ECO:0000269" key="19">
    <source ref="4"/>
</evidence>
<evidence type="ECO:0000269" key="20">
    <source ref="8"/>
</evidence>
<evidence type="ECO:0000303" key="21">
    <source ref="4"/>
</evidence>
<evidence type="ECO:0000305" key="22"/>
<name>CD82_HUMAN</name>
<sequence>MGSACIKVTKYFLFLFNLIFFILGAVILGFGVWILADKSSFISVLQTSSSSLRMGAYVFIGVGAVTMLMGFLGCIGAVNEVRCLLGLYFAFLLLILIAQVTAGALFYFNMGKLKQEMGGIVTELIRDYNSSREDSLQDAWDYVQAQVKCCGWVSFYNWTDNAELMNRPEVTYPCSCEVKGEEDNSLSVRKGFCEAPGNRTQSGNHPEDWPVYQEGCMEKVQAWLQENLGIILGVGVGVAIIELLGMVLSICLCRHVHSEDYSKVPKY</sequence>
<comment type="function">
    <text evidence="1 3 4 6 7 11 12 13 16 17 18">Structural component of specialized membrane microdomains known as tetraspanin-enriched microdomains (TERMs), which act as platforms for receptor clustering and signaling (PubMed:19497983). Participates thereby in diverse biological functions such as cell signal transduction, adhesion, migration and protein trafficking. Acts as a attenuator of EGF signaling, facilitating ligand-induced endocytosis of the receptor and its subsequent desensitization (PubMed:10985391, PubMed:35538033). Mechanistically, modulates ligand-induced ubiquitination and trafficking of EGFR via E3 ligase CBL phosphorylation by PKC (PubMed:23897813). Increases cell-matrix adhesion by regulating the membrane organization of integrin alpha4/ITA4 (PubMed:24623721, PubMed:8757325). Modulates adhesion and suppresses cell migration through other integrins such as the alpha6/ITGA6 and beta1/ITGB1 (PubMed:15557282, PubMed:17560548). Decreases cell-associated plasminogen activation by interfering with the interaction between urokinase-type plasminogen activator/PLAU and its receptor PLAUR (PubMed:15677461). Associates with CD4 or CD8 and delivers costimulatory signals for the TCR/CD3 pathway. Plays a role in TLR9 trafficking to acidified CpG-containing compartments by controlling interaction between TLR9 and VAMP3 and subsequent myddosome assembly (By similarity). Inhibits LPS-induced inflammatory response by preventing binding of LPS to TLR4 on the cell surface (PubMed:36945827). Plays a role in the activation of macrophages into anti-inflammatory phenotypes (By similarity). Independently of Toll-like receptor (TLR) signaling, is recruited to pathogen-containing phagosomes prior to fusion with lysosomes and thereby participates in antigen presentation (By similarity). Also acts to control angiogenesis and switch angiogenic milieu to quiescent state by binding and sequestering VEGFA and PDGFB to inhibit the signaling they trigger via their respective cell surface receptor (PubMed:34530889).</text>
</comment>
<comment type="subunit">
    <text evidence="1 3 4 6 7 8 11 13 15 18">Forms homooligomers (PubMed:24623721). Interacts directly with IGSF8 (PubMed:12750295). Interacts with EGFR (PubMed:10985391, PubMed:35538033). Interacts with VEGFA and PDGFB (PubMed:34530889). Interacts with ITGA4 (PubMed:8757325). Interacts with ITGA6; this interaction reduces ITGA6 cell surface expression (PubMed:15557282). Interacts with ITGB1 (PubMed:8757325). Interacts with TLR4; this interaction inhibits TLR4-mediated signaling pathway (PubMed:36945827). Interacts with TLR9 (By similarity). Interacts with PLAUR (PubMed:15677461).</text>
</comment>
<comment type="interaction">
    <interactant intactId="EBI-682379">
        <id>P27701</id>
    </interactant>
    <interactant intactId="EBI-2833872">
        <id>O15552</id>
        <label>FFAR2</label>
    </interactant>
    <organismsDiffer>false</organismsDiffer>
    <experiments>3</experiments>
</comment>
<comment type="interaction">
    <interactant intactId="EBI-682379">
        <id>P27701</id>
    </interactant>
    <interactant intactId="EBI-9018187">
        <id>P26715</id>
        <label>KLRC1</label>
    </interactant>
    <organismsDiffer>false</organismsDiffer>
    <experiments>3</experiments>
</comment>
<comment type="interaction">
    <interactant intactId="EBI-682379">
        <id>P27701</id>
    </interactant>
    <interactant intactId="EBI-741850">
        <id>Q9BZL3</id>
        <label>SMIM3</label>
    </interactant>
    <organismsDiffer>false</organismsDiffer>
    <experiments>3</experiments>
</comment>
<comment type="interaction">
    <interactant intactId="EBI-682379">
        <id>P27701</id>
    </interactant>
    <interactant intactId="EBI-712536">
        <id>P01033</id>
        <label>TIMP1</label>
    </interactant>
    <organismsDiffer>false</organismsDiffer>
    <experiments>11</experiments>
</comment>
<comment type="interaction">
    <interactant intactId="EBI-682379">
        <id>P27701</id>
    </interactant>
    <interactant intactId="EBI-682393">
        <id>Q8TAA9</id>
        <label>VANGL1</label>
    </interactant>
    <organismsDiffer>false</organismsDiffer>
    <experiments>6</experiments>
</comment>
<comment type="subcellular location">
    <subcellularLocation>
        <location evidence="11 12 14 15 18 19">Cell membrane</location>
        <topology evidence="2">Multi-pass membrane protein</topology>
    </subcellularLocation>
    <subcellularLocation>
        <location evidence="1">Cytoplasmic vesicle</location>
        <location evidence="1">Phagosome</location>
    </subcellularLocation>
</comment>
<comment type="alternative products">
    <event type="alternative splicing"/>
    <isoform>
        <id>P27701-1</id>
        <name>1</name>
        <sequence type="displayed"/>
    </isoform>
    <isoform>
        <id>P27701-2</id>
        <name>2</name>
        <sequence type="described" ref="VSP_045656"/>
    </isoform>
</comment>
<comment type="tissue specificity">
    <text>Lymphoid specific.</text>
</comment>
<comment type="PTM">
    <text evidence="13 15 16">Palmitoylated. Palmitoylation contributes to oligomerization and surface expression.</text>
</comment>
<comment type="similarity">
    <text evidence="22">Belongs to the tetraspanin (TM4SF) family.</text>
</comment>
<comment type="online information" name="Atlas of Genetics and Cytogenetics in Oncology and Haematology">
    <link uri="https://atlasgeneticsoncology.org/gene/41045/CD82"/>
</comment>
<feature type="chain" id="PRO_0000219226" description="CD82 antigen">
    <location>
        <begin position="1"/>
        <end position="267"/>
    </location>
</feature>
<feature type="topological domain" description="Cytoplasmic" evidence="2">
    <location>
        <begin position="1"/>
        <end position="11"/>
    </location>
</feature>
<feature type="transmembrane region" description="Helical" evidence="2">
    <location>
        <begin position="12"/>
        <end position="32"/>
    </location>
</feature>
<feature type="topological domain" description="Extracellular" evidence="2">
    <location>
        <begin position="33"/>
        <end position="53"/>
    </location>
</feature>
<feature type="transmembrane region" description="Helical" evidence="2">
    <location>
        <begin position="54"/>
        <end position="72"/>
    </location>
</feature>
<feature type="topological domain" description="Cytoplasmic" evidence="2">
    <location>
        <begin position="73"/>
        <end position="83"/>
    </location>
</feature>
<feature type="transmembrane region" description="Helical" evidence="2">
    <location>
        <begin position="84"/>
        <end position="110"/>
    </location>
</feature>
<feature type="topological domain" description="Extracellular" evidence="2">
    <location>
        <begin position="111"/>
        <end position="228"/>
    </location>
</feature>
<feature type="transmembrane region" description="Helical" evidence="2">
    <location>
        <begin position="229"/>
        <end position="250"/>
    </location>
</feature>
<feature type="topological domain" description="Cytoplasmic" evidence="2">
    <location>
        <begin position="251"/>
        <end position="267"/>
    </location>
</feature>
<feature type="lipid moiety-binding region" description="S-palmitoyl cysteine" evidence="16">
    <location>
        <position position="5"/>
    </location>
</feature>
<feature type="lipid moiety-binding region" description="S-palmitoyl cysteine" evidence="16">
    <location>
        <position position="74"/>
    </location>
</feature>
<feature type="glycosylation site" description="N-linked (GlcNAc...) asparagine" evidence="9 10">
    <location>
        <position position="129"/>
    </location>
</feature>
<feature type="glycosylation site" description="N-linked (GlcNAc...) asparagine" evidence="2">
    <location>
        <position position="157"/>
    </location>
</feature>
<feature type="glycosylation site" description="N-linked (GlcNAc...) asparagine" evidence="10">
    <location>
        <position position="198"/>
    </location>
</feature>
<feature type="splice variant" id="VSP_045656" description="In isoform 2." evidence="21">
    <location>
        <begin position="88"/>
        <end position="112"/>
    </location>
</feature>
<feature type="sequence variant" id="VAR_052326" description="In dbSNP:rs1139971." evidence="5 19 20">
    <original>I</original>
    <variation>V</variation>
    <location>
        <position position="241"/>
    </location>
</feature>
<feature type="mutagenesis site" description="Strong decrease in the expressions of CD82 and EGFR on the cell membrane; when associated with S-74." evidence="16">
    <original>C</original>
    <variation>S</variation>
    <location>
        <position position="5"/>
    </location>
</feature>
<feature type="mutagenesis site" description="Strong decrease in the expressions of CD82 and EGFR on the cell membrane; when associated with S-5." evidence="16">
    <original>C</original>
    <variation>S</variation>
    <location>
        <position position="74"/>
    </location>
</feature>
<feature type="sequence conflict" description="In Ref. 4; AAP76181." evidence="22" ref="4">
    <original>L</original>
    <variation>P</variation>
    <location>
        <position position="124"/>
    </location>
</feature>
<feature type="sequence conflict" description="In Ref. 2; AAB23825." evidence="22" ref="2">
    <original>II</original>
    <variation>MV</variation>
    <location>
        <begin position="240"/>
        <end position="241"/>
    </location>
</feature>
<keyword id="KW-0025">Alternative splicing</keyword>
<keyword id="KW-1003">Cell membrane</keyword>
<keyword id="KW-0968">Cytoplasmic vesicle</keyword>
<keyword id="KW-0325">Glycoprotein</keyword>
<keyword id="KW-0449">Lipoprotein</keyword>
<keyword id="KW-0472">Membrane</keyword>
<keyword id="KW-0564">Palmitate</keyword>
<keyword id="KW-1267">Proteomics identification</keyword>
<keyword id="KW-1185">Reference proteome</keyword>
<keyword id="KW-0812">Transmembrane</keyword>
<keyword id="KW-1133">Transmembrane helix</keyword>
<reference key="1">
    <citation type="journal article" date="1991" name="Eur. J. Immunol.">
        <title>A new superfamily of lymphoid and melanoma cell proteins with extensive homology to Schistosoma mansoni antigen Sm23.</title>
        <authorList>
            <person name="Gaugitsch H.W."/>
            <person name="Hofer E."/>
            <person name="Huber N.E."/>
            <person name="Schnabl E."/>
            <person name="Baumruker T."/>
        </authorList>
    </citation>
    <scope>NUCLEOTIDE SEQUENCE [MRNA] (ISOFORM 1)</scope>
    <source>
        <tissue>Peripheral blood lymphocyte</tissue>
    </source>
</reference>
<reference key="2">
    <citation type="journal article" date="1992" name="J. Immunol.">
        <title>C33 antigen recognized by monoclonal antibodies inhibitory to human T cell leukemia virus type 1-induced syncytium formation is a member of a new family of transmembrane proteins including CD9, CD37, CD53, and CD63.</title>
        <authorList>
            <person name="Imai T."/>
            <person name="Fukudome K."/>
            <person name="Takagi S."/>
            <person name="Nagira M."/>
            <person name="Furuse M."/>
            <person name="Fukuhara N."/>
            <person name="Nishimura M."/>
            <person name="Hinuma Y."/>
            <person name="Yoshie O."/>
        </authorList>
    </citation>
    <scope>NUCLEOTIDE SEQUENCE [MRNA] (ISOFORM 1)</scope>
</reference>
<reference key="3">
    <citation type="journal article" date="1995" name="Science">
        <title>KAI1, a metastasis suppressor gene for prostate cancer on human chromosome 11p11.2.</title>
        <authorList>
            <person name="Dong J.T."/>
            <person name="Barrett J.C."/>
        </authorList>
    </citation>
    <scope>NUCLEOTIDE SEQUENCE [MRNA] (ISOFORM 1)</scope>
</reference>
<reference key="4">
    <citation type="submission" date="2003-05" db="EMBL/GenBank/DDBJ databases">
        <authorList>
            <person name="Zhou G."/>
            <person name="Li S."/>
            <person name="Li H."/>
            <person name="Shen C."/>
            <person name="Li M."/>
            <person name="Xiao W."/>
            <person name="Lin L."/>
            <person name="Yang S."/>
        </authorList>
    </citation>
    <scope>NUCLEOTIDE SEQUENCE [MRNA] (ISOFORM 2)</scope>
    <scope>VARIANT VAL-241</scope>
</reference>
<reference key="5">
    <citation type="journal article" date="1997" name="Genomics">
        <title>Genomic organization of the human KAI1 metastasis-suppressor gene.</title>
        <authorList>
            <person name="Dong J.T."/>
            <person name="Isaacs W.B."/>
            <person name="Barrett J.C."/>
            <person name="Isaacs J.T."/>
        </authorList>
    </citation>
    <scope>NUCLEOTIDE SEQUENCE [GENOMIC DNA]</scope>
</reference>
<reference key="6">
    <citation type="submission" date="2004-06" db="EMBL/GenBank/DDBJ databases">
        <title>Cloning of human full open reading frames in Gateway(TM) system entry vector (pDONR201).</title>
        <authorList>
            <person name="Halleck A."/>
            <person name="Ebert L."/>
            <person name="Mkoundinya M."/>
            <person name="Schick M."/>
            <person name="Eisenstein S."/>
            <person name="Neubert P."/>
            <person name="Kstrang K."/>
            <person name="Schatten R."/>
            <person name="Shen B."/>
            <person name="Henze S."/>
            <person name="Mar W."/>
            <person name="Korn B."/>
            <person name="Zuo D."/>
            <person name="Hu Y."/>
            <person name="LaBaer J."/>
        </authorList>
    </citation>
    <scope>NUCLEOTIDE SEQUENCE [LARGE SCALE MRNA] (ISOFORM 1)</scope>
</reference>
<reference key="7">
    <citation type="journal article" date="2006" name="Nature">
        <title>Human chromosome 11 DNA sequence and analysis including novel gene identification.</title>
        <authorList>
            <person name="Taylor T.D."/>
            <person name="Noguchi H."/>
            <person name="Totoki Y."/>
            <person name="Toyoda A."/>
            <person name="Kuroki Y."/>
            <person name="Dewar K."/>
            <person name="Lloyd C."/>
            <person name="Itoh T."/>
            <person name="Takeda T."/>
            <person name="Kim D.-W."/>
            <person name="She X."/>
            <person name="Barlow K.F."/>
            <person name="Bloom T."/>
            <person name="Bruford E."/>
            <person name="Chang J.L."/>
            <person name="Cuomo C.A."/>
            <person name="Eichler E."/>
            <person name="FitzGerald M.G."/>
            <person name="Jaffe D.B."/>
            <person name="LaButti K."/>
            <person name="Nicol R."/>
            <person name="Park H.-S."/>
            <person name="Seaman C."/>
            <person name="Sougnez C."/>
            <person name="Yang X."/>
            <person name="Zimmer A.R."/>
            <person name="Zody M.C."/>
            <person name="Birren B.W."/>
            <person name="Nusbaum C."/>
            <person name="Fujiyama A."/>
            <person name="Hattori M."/>
            <person name="Rogers J."/>
            <person name="Lander E.S."/>
            <person name="Sakaki Y."/>
        </authorList>
    </citation>
    <scope>NUCLEOTIDE SEQUENCE [LARGE SCALE GENOMIC DNA]</scope>
</reference>
<reference key="8">
    <citation type="submission" date="2005-09" db="EMBL/GenBank/DDBJ databases">
        <authorList>
            <person name="Mural R.J."/>
            <person name="Istrail S."/>
            <person name="Sutton G.G."/>
            <person name="Florea L."/>
            <person name="Halpern A.L."/>
            <person name="Mobarry C.M."/>
            <person name="Lippert R."/>
            <person name="Walenz B."/>
            <person name="Shatkay H."/>
            <person name="Dew I."/>
            <person name="Miller J.R."/>
            <person name="Flanigan M.J."/>
            <person name="Edwards N.J."/>
            <person name="Bolanos R."/>
            <person name="Fasulo D."/>
            <person name="Halldorsson B.V."/>
            <person name="Hannenhalli S."/>
            <person name="Turner R."/>
            <person name="Yooseph S."/>
            <person name="Lu F."/>
            <person name="Nusskern D.R."/>
            <person name="Shue B.C."/>
            <person name="Zheng X.H."/>
            <person name="Zhong F."/>
            <person name="Delcher A.L."/>
            <person name="Huson D.H."/>
            <person name="Kravitz S.A."/>
            <person name="Mouchard L."/>
            <person name="Reinert K."/>
            <person name="Remington K.A."/>
            <person name="Clark A.G."/>
            <person name="Waterman M.S."/>
            <person name="Eichler E.E."/>
            <person name="Adams M.D."/>
            <person name="Hunkapiller M.W."/>
            <person name="Myers E.W."/>
            <person name="Venter J.C."/>
        </authorList>
    </citation>
    <scope>NUCLEOTIDE SEQUENCE [LARGE SCALE GENOMIC DNA]</scope>
    <scope>VARIANT VAL-241</scope>
</reference>
<reference key="9">
    <citation type="journal article" date="2004" name="Genome Res.">
        <title>The status, quality, and expansion of the NIH full-length cDNA project: the Mammalian Gene Collection (MGC).</title>
        <authorList>
            <consortium name="The MGC Project Team"/>
        </authorList>
    </citation>
    <scope>NUCLEOTIDE SEQUENCE [LARGE SCALE MRNA] (ISOFORM 1)</scope>
    <scope>VARIANT VAL-241</scope>
    <source>
        <tissue>Colon</tissue>
    </source>
</reference>
<reference key="10">
    <citation type="journal article" date="1996" name="J. Immunol.">
        <title>Transmembrane-4 superfamily proteins CD81 (TAPA-1), CD82, CD63, and CD53 specifically associated with integrin alpha 4 beta 1 (CD49d/CD29).</title>
        <authorList>
            <person name="Mannion B.A."/>
            <person name="Berditchevski F."/>
            <person name="Kraeft S.K."/>
            <person name="Chen L.B."/>
            <person name="Hemler M.E."/>
        </authorList>
    </citation>
    <scope>FUNCTION</scope>
    <scope>SUBCELLULAR LOCATION</scope>
    <scope>INTERACTION WITH INTEGRIN ALPHA4/ITGA4 AND BETA1/ITGB1</scope>
</reference>
<reference key="11">
    <citation type="journal article" date="2000" name="Curr. Biol.">
        <title>Attenuation of EGF receptor signaling by a metastasis suppressor, the tetraspanin CD82/KAI-1.</title>
        <authorList>
            <person name="Odintsova E."/>
            <person name="Sugiura T."/>
            <person name="Berditchevski F."/>
        </authorList>
    </citation>
    <scope>FUNCTION</scope>
    <scope>INTERACTION WITH EGFR</scope>
</reference>
<reference key="12">
    <citation type="journal article" date="2003" name="Cancer Res.">
        <title>EWI2/PGRL associates with the metastasis suppressor KAI1/CD82 and inhibits the migration of prostate cancer cells.</title>
        <authorList>
            <person name="Zhang X.A."/>
            <person name="Lane W.S."/>
            <person name="Charrin S."/>
            <person name="Rubinstein E."/>
            <person name="Liu L."/>
        </authorList>
    </citation>
    <scope>INTERACTION WITH IGSF8</scope>
</reference>
<reference key="13">
    <citation type="journal article" date="2005" name="J. Biol. Chem.">
        <title>Tetraspanin CD82 attenuates cellular morphogenesis through down-regulating integrin alpha6-mediated cell adhesion.</title>
        <authorList>
            <person name="He B."/>
            <person name="Liu L."/>
            <person name="Cook G.A."/>
            <person name="Grgurevich S."/>
            <person name="Jennings L.K."/>
            <person name="Zhang X.A."/>
        </authorList>
    </citation>
    <scope>FUNCTION</scope>
    <scope>INTERACTION WITH INTEGRIN ALPHA6/ITGA6</scope>
</reference>
<reference key="14">
    <citation type="journal article" date="2005" name="J. Biol. Chem.">
        <title>Regulation of urokinase receptor proteolytic function by the tetraspanin CD82.</title>
        <authorList>
            <person name="Bass R."/>
            <person name="Werner F."/>
            <person name="Odintsova E."/>
            <person name="Sugiura T."/>
            <person name="Berditchevski F."/>
            <person name="Ellis V."/>
        </authorList>
    </citation>
    <scope>FUNCTION</scope>
    <scope>SUBCELLULAR LOCATION</scope>
    <scope>INTERACTION WITH PLAUR</scope>
</reference>
<reference key="15">
    <citation type="journal article" date="2007" name="Biochem. Biophys. Res. Commun.">
        <title>Effect of KAI1/CD82 on the beta1 integrin maturation in highly migratory carcinoma cells.</title>
        <authorList>
            <person name="Jee B.K."/>
            <person name="Lee J.Y."/>
            <person name="Lim Y."/>
            <person name="Lee K.H."/>
            <person name="Jo Y.H."/>
        </authorList>
    </citation>
    <scope>FUNCTION</scope>
</reference>
<reference key="16">
    <citation type="journal article" date="2009" name="J. Proteome Res.">
        <title>Glycoproteomics analysis of human liver tissue by combination of multiple enzyme digestion and hydrazide chemistry.</title>
        <authorList>
            <person name="Chen R."/>
            <person name="Jiang X."/>
            <person name="Sun D."/>
            <person name="Han G."/>
            <person name="Wang F."/>
            <person name="Ye M."/>
            <person name="Wang L."/>
            <person name="Zou H."/>
        </authorList>
    </citation>
    <scope>GLYCOSYLATION [LARGE SCALE ANALYSIS] AT ASN-129</scope>
    <source>
        <tissue>Liver</tissue>
    </source>
</reference>
<reference key="17">
    <citation type="journal article" date="2009" name="FASEB J.">
        <title>CD82 endocytosis and cholesterol-dependent reorganization of tetraspanin webs and lipid rafts.</title>
        <authorList>
            <person name="Xu C."/>
            <person name="Zhang Y.H."/>
            <person name="Thangavel M."/>
            <person name="Richardson M.M."/>
            <person name="Liu L."/>
            <person name="Zhou B."/>
            <person name="Zheng Y."/>
            <person name="Ostrom R.S."/>
            <person name="Zhang X.A."/>
        </authorList>
    </citation>
    <scope>FUNCTION</scope>
    <scope>SUBCELLULAR LOCATION</scope>
</reference>
<reference key="18">
    <citation type="journal article" date="2009" name="Nat. Biotechnol.">
        <title>Mass-spectrometric identification and relative quantification of N-linked cell surface glycoproteins.</title>
        <authorList>
            <person name="Wollscheid B."/>
            <person name="Bausch-Fluck D."/>
            <person name="Henderson C."/>
            <person name="O'Brien R."/>
            <person name="Bibel M."/>
            <person name="Schiess R."/>
            <person name="Aebersold R."/>
            <person name="Watts J.D."/>
        </authorList>
    </citation>
    <scope>GLYCOSYLATION [LARGE SCALE ANALYSIS] AT ASN-129 AND ASN-198</scope>
    <source>
        <tissue>Leukemic T-cell</tissue>
    </source>
</reference>
<reference key="19">
    <citation type="journal article" date="2013" name="J. Biol. Chem.">
        <title>Metastasis suppressor tetraspanin CD82/KAI1 regulates ubiquitylation of epidermal growth factor receptor.</title>
        <authorList>
            <person name="Odintsova E."/>
            <person name="van Niel G."/>
            <person name="Conjeaud H."/>
            <person name="Raposo G."/>
            <person name="Iwamoto R."/>
            <person name="Mekada E."/>
            <person name="Berditchevski F."/>
        </authorList>
    </citation>
    <scope>FUNCTION</scope>
    <scope>SUBCELLULAR LOCATION</scope>
</reference>
<reference key="20">
    <citation type="journal article" date="2014" name="Mol. Biol. Cell">
        <title>The membrane scaffold CD82 regulates cell adhesion by altering alpha4 integrin stability and molecular density.</title>
        <authorList>
            <person name="Termini C.M."/>
            <person name="Cotter M.L."/>
            <person name="Marjon K.D."/>
            <person name="Buranda T."/>
            <person name="Lidke K.A."/>
            <person name="Gillette J.M."/>
        </authorList>
    </citation>
    <scope>FUNCTION</scope>
    <scope>SUBCELLULAR LOCATION</scope>
    <scope>SUBUNIT</scope>
    <scope>PALMITOYLATION</scope>
</reference>
<reference key="21">
    <citation type="journal article" date="2018" name="Cell Rep.">
        <title>A Dock-and-Lock Mechanism Clusters ADAM10 at Cell-Cell Junctions to Promote alpha-Toxin Cytotoxicity.</title>
        <authorList>
            <person name="Shah J."/>
            <person name="Rouaud F."/>
            <person name="Guerrera D."/>
            <person name="Vasileva E."/>
            <person name="Popov L.M."/>
            <person name="Kelley W.L."/>
            <person name="Rubinstein E."/>
            <person name="Carette J.E."/>
            <person name="Amieva M.R."/>
            <person name="Citi S."/>
        </authorList>
    </citation>
    <scope>SUBCELLULAR LOCATION</scope>
</reference>
<reference key="22">
    <citation type="journal article" date="2021" name="J. Hematol. Oncol.">
        <title>KAI1(CD82) is a key molecule to control angiogenesis and switch angiogenic milieu to quiescent state.</title>
        <authorList>
            <person name="Lee J.W."/>
            <person name="Hur J."/>
            <person name="Kwon Y.W."/>
            <person name="Chae C.W."/>
            <person name="Choi J.I."/>
            <person name="Hwang I."/>
            <person name="Yun J.Y."/>
            <person name="Kang J.A."/>
            <person name="Choi Y.E."/>
            <person name="Kim Y.H."/>
            <person name="Lee S.E."/>
            <person name="Lee C."/>
            <person name="Jo D.H."/>
            <person name="Seok H."/>
            <person name="Cho B.S."/>
            <person name="Baek S.H."/>
            <person name="Kim H.S."/>
        </authorList>
    </citation>
    <scope>FUNCTION</scope>
    <scope>PALMITOYLATION</scope>
    <scope>SUBCELLULAR LOCATION</scope>
    <scope>INTERACTION WITH VEGFA AND PDGFB</scope>
</reference>
<reference key="23">
    <citation type="journal article" date="2022" name="Acta Biochim. Biophys. Sin.">
        <title>CD82 palmitoylation site mutations at Cys5+Cys74 affect EGFR internalization and metabolism through recycling pathway.</title>
        <authorList>
            <person name="Bu J."/>
            <person name="Zhong W."/>
            <person name="Li M."/>
            <person name="He S."/>
            <person name="Zhang M."/>
            <person name="Zhang Y."/>
            <person name="Li Y."/>
        </authorList>
    </citation>
    <scope>FUNCTION</scope>
    <scope>PALMITOYLATION AT CYS-5 AND CYS-74</scope>
    <scope>INTERACTION WITH EGFR</scope>
    <scope>SUBCELLULAR LOCATION</scope>
    <scope>MUTAGENESIS OF CYS-5 AND CYS-74</scope>
</reference>
<reference key="24">
    <citation type="journal article" date="2023" name="BMB Rep.">
        <title>Recombinant human KAI1/CD82 attenuates M1 macrophage polarization on LPS-stimulated RAW264.7 cells via blocking TLR4/JNK/NF-kappaB signal pathway.</title>
        <authorList>
            <person name="Lee H."/>
            <person name="Han J.H."/>
            <person name="An K."/>
            <person name="Kang Y.J."/>
            <person name="Hwangbo H."/>
            <person name="Heo J.H."/>
            <person name="Choi B.H."/>
            <person name="Kim J.J."/>
            <person name="Kim S.R."/>
            <person name="Lee S.Y."/>
            <person name="Hur J."/>
        </authorList>
    </citation>
    <scope>FUNCTION</scope>
    <scope>SUBCELLULAR LOCATION</scope>
    <scope>INTERACTION WITH TLR4</scope>
</reference>
<protein>
    <recommendedName>
        <fullName>CD82 antigen</fullName>
    </recommendedName>
    <alternativeName>
        <fullName>C33 antigen</fullName>
    </alternativeName>
    <alternativeName>
        <fullName>IA4</fullName>
    </alternativeName>
    <alternativeName>
        <fullName>Inducible membrane protein R2</fullName>
    </alternativeName>
    <alternativeName>
        <fullName>Metastasis suppressor Kangai-1</fullName>
    </alternativeName>
    <alternativeName>
        <fullName>Suppressor of tumorigenicity 6 protein</fullName>
    </alternativeName>
    <alternativeName>
        <fullName>Tetraspanin-27</fullName>
        <shortName>Tspan-27</shortName>
    </alternativeName>
    <cdAntigenName>CD82</cdAntigenName>
</protein>
<accession>P27701</accession>
<accession>D3DQN6</accession>
<accession>E9PC70</accession>
<accession>Q7Z2D4</accession>
<accession>Q7Z5N2</accession>
<dbReference type="EMBL" id="X53795">
    <property type="protein sequence ID" value="CAA37804.1"/>
    <property type="molecule type" value="mRNA"/>
</dbReference>
<dbReference type="EMBL" id="S48196">
    <property type="protein sequence ID" value="AAB23825.1"/>
    <property type="molecule type" value="mRNA"/>
</dbReference>
<dbReference type="EMBL" id="U20770">
    <property type="protein sequence ID" value="AAC50133.1"/>
    <property type="molecule type" value="mRNA"/>
</dbReference>
<dbReference type="EMBL" id="AY303776">
    <property type="protein sequence ID" value="AAP76181.1"/>
    <property type="molecule type" value="mRNA"/>
</dbReference>
<dbReference type="EMBL" id="U67274">
    <property type="protein sequence ID" value="AAC51205.1"/>
    <property type="molecule type" value="Genomic_DNA"/>
</dbReference>
<dbReference type="EMBL" id="U67268">
    <property type="protein sequence ID" value="AAC51205.1"/>
    <property type="status" value="JOINED"/>
    <property type="molecule type" value="Genomic_DNA"/>
</dbReference>
<dbReference type="EMBL" id="U67269">
    <property type="protein sequence ID" value="AAC51205.1"/>
    <property type="status" value="JOINED"/>
    <property type="molecule type" value="Genomic_DNA"/>
</dbReference>
<dbReference type="EMBL" id="U67270">
    <property type="protein sequence ID" value="AAC51205.1"/>
    <property type="status" value="JOINED"/>
    <property type="molecule type" value="Genomic_DNA"/>
</dbReference>
<dbReference type="EMBL" id="U67271">
    <property type="protein sequence ID" value="AAC51205.1"/>
    <property type="status" value="JOINED"/>
    <property type="molecule type" value="Genomic_DNA"/>
</dbReference>
<dbReference type="EMBL" id="U67272">
    <property type="protein sequence ID" value="AAC51205.1"/>
    <property type="status" value="JOINED"/>
    <property type="molecule type" value="Genomic_DNA"/>
</dbReference>
<dbReference type="EMBL" id="U67273">
    <property type="protein sequence ID" value="AAC51205.1"/>
    <property type="status" value="JOINED"/>
    <property type="molecule type" value="Genomic_DNA"/>
</dbReference>
<dbReference type="EMBL" id="CR542255">
    <property type="protein sequence ID" value="CAG47051.1"/>
    <property type="molecule type" value="mRNA"/>
</dbReference>
<dbReference type="EMBL" id="AC010768">
    <property type="status" value="NOT_ANNOTATED_CDS"/>
    <property type="molecule type" value="Genomic_DNA"/>
</dbReference>
<dbReference type="EMBL" id="CH471064">
    <property type="protein sequence ID" value="EAW68063.1"/>
    <property type="molecule type" value="Genomic_DNA"/>
</dbReference>
<dbReference type="EMBL" id="CH471064">
    <property type="protein sequence ID" value="EAW68064.1"/>
    <property type="molecule type" value="Genomic_DNA"/>
</dbReference>
<dbReference type="EMBL" id="BC000726">
    <property type="protein sequence ID" value="AAH00726.1"/>
    <property type="molecule type" value="mRNA"/>
</dbReference>
<dbReference type="EMBL" id="BC001821">
    <property type="protein sequence ID" value="AAH01821.1"/>
    <property type="molecule type" value="mRNA"/>
</dbReference>
<dbReference type="CCDS" id="CCDS31469.1">
    <molecule id="P27701-2"/>
</dbReference>
<dbReference type="CCDS" id="CCDS7909.1">
    <molecule id="P27701-1"/>
</dbReference>
<dbReference type="PIR" id="I38942">
    <property type="entry name" value="A46493"/>
</dbReference>
<dbReference type="RefSeq" id="NP_001020015.1">
    <molecule id="P27701-2"/>
    <property type="nucleotide sequence ID" value="NM_001024844.2"/>
</dbReference>
<dbReference type="RefSeq" id="NP_002222.1">
    <molecule id="P27701-1"/>
    <property type="nucleotide sequence ID" value="NM_002231.4"/>
</dbReference>
<dbReference type="RefSeq" id="XP_006718286.1">
    <property type="nucleotide sequence ID" value="XM_006718223.2"/>
</dbReference>
<dbReference type="RefSeq" id="XP_047282859.1">
    <molecule id="P27701-1"/>
    <property type="nucleotide sequence ID" value="XM_047426903.1"/>
</dbReference>
<dbReference type="RefSeq" id="XP_047282860.1">
    <molecule id="P27701-1"/>
    <property type="nucleotide sequence ID" value="XM_047426904.1"/>
</dbReference>
<dbReference type="RefSeq" id="XP_054224675.1">
    <molecule id="P27701-1"/>
    <property type="nucleotide sequence ID" value="XM_054368700.1"/>
</dbReference>
<dbReference type="SMR" id="P27701"/>
<dbReference type="BioGRID" id="109935">
    <property type="interactions" value="42"/>
</dbReference>
<dbReference type="FunCoup" id="P27701">
    <property type="interactions" value="324"/>
</dbReference>
<dbReference type="IntAct" id="P27701">
    <property type="interactions" value="21"/>
</dbReference>
<dbReference type="MINT" id="P27701"/>
<dbReference type="STRING" id="9606.ENSP00000227155"/>
<dbReference type="GlyConnect" id="1089">
    <property type="glycosylation" value="2 N-Linked glycans (1 site)"/>
</dbReference>
<dbReference type="GlyCosmos" id="P27701">
    <property type="glycosylation" value="3 sites, 2 glycans"/>
</dbReference>
<dbReference type="GlyGen" id="P27701">
    <property type="glycosylation" value="5 sites, 12 N-linked glycans (2 sites), 1 O-linked glycan (2 sites)"/>
</dbReference>
<dbReference type="iPTMnet" id="P27701"/>
<dbReference type="PhosphoSitePlus" id="P27701"/>
<dbReference type="SwissPalm" id="P27701"/>
<dbReference type="BioMuta" id="CD82"/>
<dbReference type="DMDM" id="131775"/>
<dbReference type="jPOST" id="P27701"/>
<dbReference type="MassIVE" id="P27701"/>
<dbReference type="PaxDb" id="9606-ENSP00000227155"/>
<dbReference type="PeptideAtlas" id="P27701"/>
<dbReference type="ProteomicsDB" id="19382"/>
<dbReference type="ProteomicsDB" id="54407">
    <molecule id="P27701-1"/>
</dbReference>
<dbReference type="Pumba" id="P27701"/>
<dbReference type="Antibodypedia" id="3743">
    <property type="antibodies" value="649 antibodies from 43 providers"/>
</dbReference>
<dbReference type="DNASU" id="3732"/>
<dbReference type="Ensembl" id="ENST00000227155.9">
    <molecule id="P27701-1"/>
    <property type="protein sequence ID" value="ENSP00000227155.4"/>
    <property type="gene ID" value="ENSG00000085117.13"/>
</dbReference>
<dbReference type="Ensembl" id="ENST00000342935.7">
    <molecule id="P27701-2"/>
    <property type="protein sequence ID" value="ENSP00000339686.3"/>
    <property type="gene ID" value="ENSG00000085117.13"/>
</dbReference>
<dbReference type="GeneID" id="3732"/>
<dbReference type="KEGG" id="hsa:3732"/>
<dbReference type="MANE-Select" id="ENST00000227155.9">
    <property type="protein sequence ID" value="ENSP00000227155.4"/>
    <property type="RefSeq nucleotide sequence ID" value="NM_002231.4"/>
    <property type="RefSeq protein sequence ID" value="NP_002222.1"/>
</dbReference>
<dbReference type="UCSC" id="uc001myc.4">
    <molecule id="P27701-1"/>
    <property type="organism name" value="human"/>
</dbReference>
<dbReference type="AGR" id="HGNC:6210"/>
<dbReference type="CTD" id="3732"/>
<dbReference type="DisGeNET" id="3732"/>
<dbReference type="GeneCards" id="CD82"/>
<dbReference type="HGNC" id="HGNC:6210">
    <property type="gene designation" value="CD82"/>
</dbReference>
<dbReference type="HPA" id="ENSG00000085117">
    <property type="expression patterns" value="Low tissue specificity"/>
</dbReference>
<dbReference type="MalaCards" id="CD82"/>
<dbReference type="MIM" id="600623">
    <property type="type" value="gene"/>
</dbReference>
<dbReference type="neXtProt" id="NX_P27701"/>
<dbReference type="OpenTargets" id="ENSG00000085117"/>
<dbReference type="PharmGKB" id="PA142672155"/>
<dbReference type="VEuPathDB" id="HostDB:ENSG00000085117"/>
<dbReference type="eggNOG" id="KOG3882">
    <property type="taxonomic scope" value="Eukaryota"/>
</dbReference>
<dbReference type="GeneTree" id="ENSGT00940000158481"/>
<dbReference type="InParanoid" id="P27701"/>
<dbReference type="OMA" id="TTEHAWD"/>
<dbReference type="OrthoDB" id="10016273at2759"/>
<dbReference type="PAN-GO" id="P27701">
    <property type="GO annotations" value="1 GO annotation based on evolutionary models"/>
</dbReference>
<dbReference type="PhylomeDB" id="P27701"/>
<dbReference type="TreeFam" id="TF352892"/>
<dbReference type="PathwayCommons" id="P27701"/>
<dbReference type="SignaLink" id="P27701"/>
<dbReference type="SIGNOR" id="P27701"/>
<dbReference type="BioGRID-ORCS" id="3732">
    <property type="hits" value="7 hits in 1158 CRISPR screens"/>
</dbReference>
<dbReference type="ChiTaRS" id="CD82">
    <property type="organism name" value="human"/>
</dbReference>
<dbReference type="GeneWiki" id="CD82_(gene)"/>
<dbReference type="GenomeRNAi" id="3732"/>
<dbReference type="Pharos" id="P27701">
    <property type="development level" value="Tbio"/>
</dbReference>
<dbReference type="PRO" id="PR:P27701"/>
<dbReference type="Proteomes" id="UP000005640">
    <property type="component" value="Chromosome 11"/>
</dbReference>
<dbReference type="RNAct" id="P27701">
    <property type="molecule type" value="protein"/>
</dbReference>
<dbReference type="Bgee" id="ENSG00000085117">
    <property type="expression patterns" value="Expressed in olfactory bulb and 194 other cell types or tissues"/>
</dbReference>
<dbReference type="ExpressionAtlas" id="P27701">
    <property type="expression patterns" value="baseline and differential"/>
</dbReference>
<dbReference type="GO" id="GO:0070062">
    <property type="term" value="C:extracellular exosome"/>
    <property type="evidence" value="ECO:0007005"/>
    <property type="project" value="UniProtKB"/>
</dbReference>
<dbReference type="GO" id="GO:0045335">
    <property type="term" value="C:phagocytic vesicle"/>
    <property type="evidence" value="ECO:0007669"/>
    <property type="project" value="UniProtKB-SubCell"/>
</dbReference>
<dbReference type="GO" id="GO:0005886">
    <property type="term" value="C:plasma membrane"/>
    <property type="evidence" value="ECO:0000314"/>
    <property type="project" value="UniProtKB"/>
</dbReference>
<dbReference type="CDD" id="cd03160">
    <property type="entry name" value="CD37_CD82_like_LEL"/>
    <property type="match status" value="1"/>
</dbReference>
<dbReference type="FunFam" id="1.10.1450.10:FF:000021">
    <property type="entry name" value="Tetraspanin"/>
    <property type="match status" value="1"/>
</dbReference>
<dbReference type="Gene3D" id="1.10.1450.10">
    <property type="entry name" value="Tetraspanin"/>
    <property type="match status" value="1"/>
</dbReference>
<dbReference type="InterPro" id="IPR018499">
    <property type="entry name" value="Tetraspanin/Peripherin"/>
</dbReference>
<dbReference type="InterPro" id="IPR000301">
    <property type="entry name" value="Tetraspanin_animals"/>
</dbReference>
<dbReference type="InterPro" id="IPR018503">
    <property type="entry name" value="Tetraspanin_CS"/>
</dbReference>
<dbReference type="InterPro" id="IPR008952">
    <property type="entry name" value="Tetraspanin_EC2_sf"/>
</dbReference>
<dbReference type="PANTHER" id="PTHR19282:SF44">
    <property type="entry name" value="CD82 ANTIGEN"/>
    <property type="match status" value="1"/>
</dbReference>
<dbReference type="PANTHER" id="PTHR19282">
    <property type="entry name" value="TETRASPANIN"/>
    <property type="match status" value="1"/>
</dbReference>
<dbReference type="Pfam" id="PF00335">
    <property type="entry name" value="Tetraspanin"/>
    <property type="match status" value="1"/>
</dbReference>
<dbReference type="PIRSF" id="PIRSF002419">
    <property type="entry name" value="Tetraspanin"/>
    <property type="match status" value="1"/>
</dbReference>
<dbReference type="PRINTS" id="PR00259">
    <property type="entry name" value="TMFOUR"/>
</dbReference>
<dbReference type="SUPFAM" id="SSF48652">
    <property type="entry name" value="Tetraspanin"/>
    <property type="match status" value="1"/>
</dbReference>
<dbReference type="PROSITE" id="PS00421">
    <property type="entry name" value="TM4_1"/>
    <property type="match status" value="1"/>
</dbReference>
<proteinExistence type="evidence at protein level"/>
<gene>
    <name type="primary">CD82</name>
    <name type="synonym">KAI1</name>
    <name type="synonym">SAR2</name>
    <name type="synonym">ST6</name>
    <name type="synonym">TSPAN27</name>
</gene>
<organism>
    <name type="scientific">Homo sapiens</name>
    <name type="common">Human</name>
    <dbReference type="NCBI Taxonomy" id="9606"/>
    <lineage>
        <taxon>Eukaryota</taxon>
        <taxon>Metazoa</taxon>
        <taxon>Chordata</taxon>
        <taxon>Craniata</taxon>
        <taxon>Vertebrata</taxon>
        <taxon>Euteleostomi</taxon>
        <taxon>Mammalia</taxon>
        <taxon>Eutheria</taxon>
        <taxon>Euarchontoglires</taxon>
        <taxon>Primates</taxon>
        <taxon>Haplorrhini</taxon>
        <taxon>Catarrhini</taxon>
        <taxon>Hominidae</taxon>
        <taxon>Homo</taxon>
    </lineage>
</organism>